<feature type="chain" id="PRO_1000018216" description="Tryptophan synthase alpha chain">
    <location>
        <begin position="1"/>
        <end position="265"/>
    </location>
</feature>
<feature type="active site" description="Proton acceptor" evidence="1">
    <location>
        <position position="49"/>
    </location>
</feature>
<feature type="active site" description="Proton acceptor" evidence="1">
    <location>
        <position position="60"/>
    </location>
</feature>
<proteinExistence type="inferred from homology"/>
<keyword id="KW-0028">Amino-acid biosynthesis</keyword>
<keyword id="KW-0057">Aromatic amino acid biosynthesis</keyword>
<keyword id="KW-0456">Lyase</keyword>
<keyword id="KW-1185">Reference proteome</keyword>
<keyword id="KW-0822">Tryptophan biosynthesis</keyword>
<name>TRPA_HERAR</name>
<reference key="1">
    <citation type="journal article" date="2007" name="PLoS Genet.">
        <title>A tale of two oxidation states: bacterial colonization of arsenic-rich environments.</title>
        <authorList>
            <person name="Muller D."/>
            <person name="Medigue C."/>
            <person name="Koechler S."/>
            <person name="Barbe V."/>
            <person name="Barakat M."/>
            <person name="Talla E."/>
            <person name="Bonnefoy V."/>
            <person name="Krin E."/>
            <person name="Arsene-Ploetze F."/>
            <person name="Carapito C."/>
            <person name="Chandler M."/>
            <person name="Cournoyer B."/>
            <person name="Cruveiller S."/>
            <person name="Dossat C."/>
            <person name="Duval S."/>
            <person name="Heymann M."/>
            <person name="Leize E."/>
            <person name="Lieutaud A."/>
            <person name="Lievremont D."/>
            <person name="Makita Y."/>
            <person name="Mangenot S."/>
            <person name="Nitschke W."/>
            <person name="Ortet P."/>
            <person name="Perdrial N."/>
            <person name="Schoepp B."/>
            <person name="Siguier P."/>
            <person name="Simeonova D.D."/>
            <person name="Rouy Z."/>
            <person name="Segurens B."/>
            <person name="Turlin E."/>
            <person name="Vallenet D."/>
            <person name="van Dorsselaer A."/>
            <person name="Weiss S."/>
            <person name="Weissenbach J."/>
            <person name="Lett M.-C."/>
            <person name="Danchin A."/>
            <person name="Bertin P.N."/>
        </authorList>
    </citation>
    <scope>NUCLEOTIDE SEQUENCE [LARGE SCALE GENOMIC DNA]</scope>
    <source>
        <strain>ULPAs1</strain>
    </source>
</reference>
<comment type="function">
    <text evidence="1">The alpha subunit is responsible for the aldol cleavage of indoleglycerol phosphate to indole and glyceraldehyde 3-phosphate.</text>
</comment>
<comment type="catalytic activity">
    <reaction evidence="1">
        <text>(1S,2R)-1-C-(indol-3-yl)glycerol 3-phosphate + L-serine = D-glyceraldehyde 3-phosphate + L-tryptophan + H2O</text>
        <dbReference type="Rhea" id="RHEA:10532"/>
        <dbReference type="ChEBI" id="CHEBI:15377"/>
        <dbReference type="ChEBI" id="CHEBI:33384"/>
        <dbReference type="ChEBI" id="CHEBI:57912"/>
        <dbReference type="ChEBI" id="CHEBI:58866"/>
        <dbReference type="ChEBI" id="CHEBI:59776"/>
        <dbReference type="EC" id="4.2.1.20"/>
    </reaction>
</comment>
<comment type="pathway">
    <text evidence="1">Amino-acid biosynthesis; L-tryptophan biosynthesis; L-tryptophan from chorismate: step 5/5.</text>
</comment>
<comment type="subunit">
    <text evidence="1">Tetramer of two alpha and two beta chains.</text>
</comment>
<comment type="similarity">
    <text evidence="1">Belongs to the TrpA family.</text>
</comment>
<gene>
    <name evidence="1" type="primary">trpA</name>
    <name type="ordered locus">HEAR1224</name>
</gene>
<evidence type="ECO:0000255" key="1">
    <source>
        <dbReference type="HAMAP-Rule" id="MF_00131"/>
    </source>
</evidence>
<organism>
    <name type="scientific">Herminiimonas arsenicoxydans</name>
    <dbReference type="NCBI Taxonomy" id="204773"/>
    <lineage>
        <taxon>Bacteria</taxon>
        <taxon>Pseudomonadati</taxon>
        <taxon>Pseudomonadota</taxon>
        <taxon>Betaproteobacteria</taxon>
        <taxon>Burkholderiales</taxon>
        <taxon>Oxalobacteraceae</taxon>
        <taxon>Herminiimonas</taxon>
    </lineage>
</organism>
<accession>A4G4G3</accession>
<dbReference type="EC" id="4.2.1.20" evidence="1"/>
<dbReference type="EMBL" id="CU207211">
    <property type="protein sequence ID" value="CAL61400.1"/>
    <property type="molecule type" value="Genomic_DNA"/>
</dbReference>
<dbReference type="SMR" id="A4G4G3"/>
<dbReference type="STRING" id="204773.HEAR1224"/>
<dbReference type="KEGG" id="har:HEAR1224"/>
<dbReference type="eggNOG" id="COG0159">
    <property type="taxonomic scope" value="Bacteria"/>
</dbReference>
<dbReference type="HOGENOM" id="CLU_016734_0_0_4"/>
<dbReference type="OrthoDB" id="9804578at2"/>
<dbReference type="UniPathway" id="UPA00035">
    <property type="reaction ID" value="UER00044"/>
</dbReference>
<dbReference type="Proteomes" id="UP000006697">
    <property type="component" value="Chromosome"/>
</dbReference>
<dbReference type="GO" id="GO:0005829">
    <property type="term" value="C:cytosol"/>
    <property type="evidence" value="ECO:0007669"/>
    <property type="project" value="TreeGrafter"/>
</dbReference>
<dbReference type="GO" id="GO:0004834">
    <property type="term" value="F:tryptophan synthase activity"/>
    <property type="evidence" value="ECO:0007669"/>
    <property type="project" value="UniProtKB-UniRule"/>
</dbReference>
<dbReference type="CDD" id="cd04724">
    <property type="entry name" value="Tryptophan_synthase_alpha"/>
    <property type="match status" value="1"/>
</dbReference>
<dbReference type="FunFam" id="3.20.20.70:FF:000037">
    <property type="entry name" value="Tryptophan synthase alpha chain"/>
    <property type="match status" value="1"/>
</dbReference>
<dbReference type="Gene3D" id="3.20.20.70">
    <property type="entry name" value="Aldolase class I"/>
    <property type="match status" value="1"/>
</dbReference>
<dbReference type="HAMAP" id="MF_00131">
    <property type="entry name" value="Trp_synth_alpha"/>
    <property type="match status" value="1"/>
</dbReference>
<dbReference type="InterPro" id="IPR013785">
    <property type="entry name" value="Aldolase_TIM"/>
</dbReference>
<dbReference type="InterPro" id="IPR011060">
    <property type="entry name" value="RibuloseP-bd_barrel"/>
</dbReference>
<dbReference type="InterPro" id="IPR018204">
    <property type="entry name" value="Trp_synthase_alpha_AS"/>
</dbReference>
<dbReference type="InterPro" id="IPR002028">
    <property type="entry name" value="Trp_synthase_suA"/>
</dbReference>
<dbReference type="NCBIfam" id="TIGR00262">
    <property type="entry name" value="trpA"/>
    <property type="match status" value="1"/>
</dbReference>
<dbReference type="PANTHER" id="PTHR43406:SF1">
    <property type="entry name" value="TRYPTOPHAN SYNTHASE ALPHA CHAIN, CHLOROPLASTIC"/>
    <property type="match status" value="1"/>
</dbReference>
<dbReference type="PANTHER" id="PTHR43406">
    <property type="entry name" value="TRYPTOPHAN SYNTHASE, ALPHA CHAIN"/>
    <property type="match status" value="1"/>
</dbReference>
<dbReference type="Pfam" id="PF00290">
    <property type="entry name" value="Trp_syntA"/>
    <property type="match status" value="1"/>
</dbReference>
<dbReference type="SUPFAM" id="SSF51366">
    <property type="entry name" value="Ribulose-phoshate binding barrel"/>
    <property type="match status" value="1"/>
</dbReference>
<dbReference type="PROSITE" id="PS00167">
    <property type="entry name" value="TRP_SYNTHASE_ALPHA"/>
    <property type="match status" value="1"/>
</dbReference>
<sequence>MSRIQSTFAALAAKNKKGLIPFITAGDPAPDLTVPLMHALVAGGADILELGVPFSDPMAEGPVIQRACERALKFNVSLHDVLGFVSEFRKTDTTTPVVLMGYANPIERMGQTAFVLAAKAAGVDGTIVVDYPPEECEEFAATLKANDMDPIFLLSPTSTEERIQQVAKFGSGFSYYVSLKGVTGSANIDTQDVAQRIEAIRKHVKLPIGVGFGIRDAATAKAVATVSDAVVIGSRIIQELENTPRERAVEAAQTFISGIRKALDE</sequence>
<protein>
    <recommendedName>
        <fullName evidence="1">Tryptophan synthase alpha chain</fullName>
        <ecNumber evidence="1">4.2.1.20</ecNumber>
    </recommendedName>
</protein>